<protein>
    <recommendedName>
        <fullName evidence="9">Bomanin Short 2</fullName>
    </recommendedName>
    <alternativeName>
        <fullName evidence="6">Bomanin-2</fullName>
    </alternativeName>
    <alternativeName>
        <fullName evidence="9">Immune-induced peptide 2</fullName>
        <shortName evidence="7 9">DIM-2</shortName>
    </alternativeName>
</protein>
<accession>O77150</accession>
<accession>Q8MLI5</accession>
<accession>Q9V8F9</accession>
<gene>
    <name evidence="9" type="primary">BomS2</name>
    <name evidence="9" type="synonym">Bom2</name>
    <name evidence="9" type="synonym">IM2</name>
    <name evidence="9" type="ORF">CG18106</name>
</gene>
<reference key="1">
    <citation type="journal article" date="1998" name="Proc. Natl. Acad. Sci. U.S.A.">
        <title>Differential display of peptides induced during the immune response of Drosophila: a matrix-assisted laser desorption ionization time-of-flight mass spectrometry study.</title>
        <authorList>
            <person name="Uttenweiler-Joseph S."/>
            <person name="Moniatte M."/>
            <person name="Lagueux M."/>
            <person name="van Dorsselaer A."/>
            <person name="Hoffmann J.A."/>
            <person name="Bulet P."/>
        </authorList>
    </citation>
    <scope>NUCLEOTIDE SEQUENCE [MRNA]</scope>
    <scope>PROTEIN SEQUENCE OF 29-44</scope>
    <scope>FUNCTION</scope>
    <scope>SUBCELLULAR LOCATION</scope>
    <scope>TISSUE SPECIFICITY</scope>
    <scope>INDUCTION BY BACTERIA</scope>
    <scope>AMIDATION AT GLY-43</scope>
    <scope>DISULFIDE BOND</scope>
    <scope>MASS SPECTROMETRY</scope>
    <source>
        <strain evidence="7">Oregon-R</strain>
        <tissue evidence="7">Hemolymph</tissue>
    </source>
</reference>
<reference key="2">
    <citation type="journal article" date="2000" name="Science">
        <title>The genome sequence of Drosophila melanogaster.</title>
        <authorList>
            <person name="Adams M.D."/>
            <person name="Celniker S.E."/>
            <person name="Holt R.A."/>
            <person name="Evans C.A."/>
            <person name="Gocayne J.D."/>
            <person name="Amanatides P.G."/>
            <person name="Scherer S.E."/>
            <person name="Li P.W."/>
            <person name="Hoskins R.A."/>
            <person name="Galle R.F."/>
            <person name="George R.A."/>
            <person name="Lewis S.E."/>
            <person name="Richards S."/>
            <person name="Ashburner M."/>
            <person name="Henderson S.N."/>
            <person name="Sutton G.G."/>
            <person name="Wortman J.R."/>
            <person name="Yandell M.D."/>
            <person name="Zhang Q."/>
            <person name="Chen L.X."/>
            <person name="Brandon R.C."/>
            <person name="Rogers Y.-H.C."/>
            <person name="Blazej R.G."/>
            <person name="Champe M."/>
            <person name="Pfeiffer B.D."/>
            <person name="Wan K.H."/>
            <person name="Doyle C."/>
            <person name="Baxter E.G."/>
            <person name="Helt G."/>
            <person name="Nelson C.R."/>
            <person name="Miklos G.L.G."/>
            <person name="Abril J.F."/>
            <person name="Agbayani A."/>
            <person name="An H.-J."/>
            <person name="Andrews-Pfannkoch C."/>
            <person name="Baldwin D."/>
            <person name="Ballew R.M."/>
            <person name="Basu A."/>
            <person name="Baxendale J."/>
            <person name="Bayraktaroglu L."/>
            <person name="Beasley E.M."/>
            <person name="Beeson K.Y."/>
            <person name="Benos P.V."/>
            <person name="Berman B.P."/>
            <person name="Bhandari D."/>
            <person name="Bolshakov S."/>
            <person name="Borkova D."/>
            <person name="Botchan M.R."/>
            <person name="Bouck J."/>
            <person name="Brokstein P."/>
            <person name="Brottier P."/>
            <person name="Burtis K.C."/>
            <person name="Busam D.A."/>
            <person name="Butler H."/>
            <person name="Cadieu E."/>
            <person name="Center A."/>
            <person name="Chandra I."/>
            <person name="Cherry J.M."/>
            <person name="Cawley S."/>
            <person name="Dahlke C."/>
            <person name="Davenport L.B."/>
            <person name="Davies P."/>
            <person name="de Pablos B."/>
            <person name="Delcher A."/>
            <person name="Deng Z."/>
            <person name="Mays A.D."/>
            <person name="Dew I."/>
            <person name="Dietz S.M."/>
            <person name="Dodson K."/>
            <person name="Doup L.E."/>
            <person name="Downes M."/>
            <person name="Dugan-Rocha S."/>
            <person name="Dunkov B.C."/>
            <person name="Dunn P."/>
            <person name="Durbin K.J."/>
            <person name="Evangelista C.C."/>
            <person name="Ferraz C."/>
            <person name="Ferriera S."/>
            <person name="Fleischmann W."/>
            <person name="Fosler C."/>
            <person name="Gabrielian A.E."/>
            <person name="Garg N.S."/>
            <person name="Gelbart W.M."/>
            <person name="Glasser K."/>
            <person name="Glodek A."/>
            <person name="Gong F."/>
            <person name="Gorrell J.H."/>
            <person name="Gu Z."/>
            <person name="Guan P."/>
            <person name="Harris M."/>
            <person name="Harris N.L."/>
            <person name="Harvey D.A."/>
            <person name="Heiman T.J."/>
            <person name="Hernandez J.R."/>
            <person name="Houck J."/>
            <person name="Hostin D."/>
            <person name="Houston K.A."/>
            <person name="Howland T.J."/>
            <person name="Wei M.-H."/>
            <person name="Ibegwam C."/>
            <person name="Jalali M."/>
            <person name="Kalush F."/>
            <person name="Karpen G.H."/>
            <person name="Ke Z."/>
            <person name="Kennison J.A."/>
            <person name="Ketchum K.A."/>
            <person name="Kimmel B.E."/>
            <person name="Kodira C.D."/>
            <person name="Kraft C.L."/>
            <person name="Kravitz S."/>
            <person name="Kulp D."/>
            <person name="Lai Z."/>
            <person name="Lasko P."/>
            <person name="Lei Y."/>
            <person name="Levitsky A.A."/>
            <person name="Li J.H."/>
            <person name="Li Z."/>
            <person name="Liang Y."/>
            <person name="Lin X."/>
            <person name="Liu X."/>
            <person name="Mattei B."/>
            <person name="McIntosh T.C."/>
            <person name="McLeod M.P."/>
            <person name="McPherson D."/>
            <person name="Merkulov G."/>
            <person name="Milshina N.V."/>
            <person name="Mobarry C."/>
            <person name="Morris J."/>
            <person name="Moshrefi A."/>
            <person name="Mount S.M."/>
            <person name="Moy M."/>
            <person name="Murphy B."/>
            <person name="Murphy L."/>
            <person name="Muzny D.M."/>
            <person name="Nelson D.L."/>
            <person name="Nelson D.R."/>
            <person name="Nelson K.A."/>
            <person name="Nixon K."/>
            <person name="Nusskern D.R."/>
            <person name="Pacleb J.M."/>
            <person name="Palazzolo M."/>
            <person name="Pittman G.S."/>
            <person name="Pan S."/>
            <person name="Pollard J."/>
            <person name="Puri V."/>
            <person name="Reese M.G."/>
            <person name="Reinert K."/>
            <person name="Remington K."/>
            <person name="Saunders R.D.C."/>
            <person name="Scheeler F."/>
            <person name="Shen H."/>
            <person name="Shue B.C."/>
            <person name="Siden-Kiamos I."/>
            <person name="Simpson M."/>
            <person name="Skupski M.P."/>
            <person name="Smith T.J."/>
            <person name="Spier E."/>
            <person name="Spradling A.C."/>
            <person name="Stapleton M."/>
            <person name="Strong R."/>
            <person name="Sun E."/>
            <person name="Svirskas R."/>
            <person name="Tector C."/>
            <person name="Turner R."/>
            <person name="Venter E."/>
            <person name="Wang A.H."/>
            <person name="Wang X."/>
            <person name="Wang Z.-Y."/>
            <person name="Wassarman D.A."/>
            <person name="Weinstock G.M."/>
            <person name="Weissenbach J."/>
            <person name="Williams S.M."/>
            <person name="Woodage T."/>
            <person name="Worley K.C."/>
            <person name="Wu D."/>
            <person name="Yang S."/>
            <person name="Yao Q.A."/>
            <person name="Ye J."/>
            <person name="Yeh R.-F."/>
            <person name="Zaveri J.S."/>
            <person name="Zhan M."/>
            <person name="Zhang G."/>
            <person name="Zhao Q."/>
            <person name="Zheng L."/>
            <person name="Zheng X.H."/>
            <person name="Zhong F.N."/>
            <person name="Zhong W."/>
            <person name="Zhou X."/>
            <person name="Zhu S.C."/>
            <person name="Zhu X."/>
            <person name="Smith H.O."/>
            <person name="Gibbs R.A."/>
            <person name="Myers E.W."/>
            <person name="Rubin G.M."/>
            <person name="Venter J.C."/>
        </authorList>
    </citation>
    <scope>NUCLEOTIDE SEQUENCE [LARGE SCALE GENOMIC DNA]</scope>
    <source>
        <strain>Berkeley</strain>
    </source>
</reference>
<reference key="3">
    <citation type="journal article" date="2002" name="Genome Biol.">
        <title>Annotation of the Drosophila melanogaster euchromatic genome: a systematic review.</title>
        <authorList>
            <person name="Misra S."/>
            <person name="Crosby M.A."/>
            <person name="Mungall C.J."/>
            <person name="Matthews B.B."/>
            <person name="Campbell K.S."/>
            <person name="Hradecky P."/>
            <person name="Huang Y."/>
            <person name="Kaminker J.S."/>
            <person name="Millburn G.H."/>
            <person name="Prochnik S.E."/>
            <person name="Smith C.D."/>
            <person name="Tupy J.L."/>
            <person name="Whitfield E.J."/>
            <person name="Bayraktaroglu L."/>
            <person name="Berman B.P."/>
            <person name="Bettencourt B.R."/>
            <person name="Celniker S.E."/>
            <person name="de Grey A.D.N.J."/>
            <person name="Drysdale R.A."/>
            <person name="Harris N.L."/>
            <person name="Richter J."/>
            <person name="Russo S."/>
            <person name="Schroeder A.J."/>
            <person name="Shu S.Q."/>
            <person name="Stapleton M."/>
            <person name="Yamada C."/>
            <person name="Ashburner M."/>
            <person name="Gelbart W.M."/>
            <person name="Rubin G.M."/>
            <person name="Lewis S.E."/>
        </authorList>
    </citation>
    <scope>GENOME REANNOTATION</scope>
    <source>
        <strain>Berkeley</strain>
    </source>
</reference>
<reference key="4">
    <citation type="journal article" date="2002" name="Genome Biol.">
        <title>A Drosophila full-length cDNA resource.</title>
        <authorList>
            <person name="Stapleton M."/>
            <person name="Carlson J.W."/>
            <person name="Brokstein P."/>
            <person name="Yu C."/>
            <person name="Champe M."/>
            <person name="George R.A."/>
            <person name="Guarin H."/>
            <person name="Kronmiller B."/>
            <person name="Pacleb J.M."/>
            <person name="Park S."/>
            <person name="Wan K.H."/>
            <person name="Rubin G.M."/>
            <person name="Celniker S.E."/>
        </authorList>
    </citation>
    <scope>NUCLEOTIDE SEQUENCE [LARGE SCALE MRNA]</scope>
    <source>
        <strain>Berkeley</strain>
        <tissue>Head</tissue>
    </source>
</reference>
<reference key="5">
    <citation type="journal article" date="2002" name="J. Biol. Chem.">
        <title>Peptidomics of the larval Drosophila melanogaster central nervous system.</title>
        <authorList>
            <person name="Baggerman G."/>
            <person name="Cerstiaens A."/>
            <person name="De Loof A."/>
            <person name="Schoofs L."/>
        </authorList>
    </citation>
    <scope>PROTEIN SEQUENCE OF 28-43</scope>
    <scope>AMIDATION AT GLY-43</scope>
    <source>
        <tissue>Larva</tissue>
    </source>
</reference>
<reference key="6">
    <citation type="journal article" date="2015" name="PLoS Pathog.">
        <title>An effector Peptide family required for Drosophila toll-mediated immunity.</title>
        <authorList>
            <person name="Clemmons A.W."/>
            <person name="Lindsay S.A."/>
            <person name="Wasserman S.A."/>
        </authorList>
    </citation>
    <scope>FUNCTION</scope>
</reference>
<reference key="7">
    <citation type="journal article" date="2018" name="J. Innate Immun.">
        <title>Short-Form Bomanins Mediate Humoral Immunity in Drosophila.</title>
        <authorList>
            <person name="Lindsay S.A."/>
            <person name="Lin S.J.H."/>
            <person name="Wasserman S.A."/>
        </authorList>
    </citation>
    <scope>FUNCTION</scope>
    <scope>SUBCELLULAR LOCATION</scope>
    <scope>TISSUE SPECIFICITY</scope>
    <scope>INDUCTION BY BACTERIA</scope>
</reference>
<name>BM02_DROME</name>
<feature type="signal peptide" evidence="1">
    <location>
        <begin position="1"/>
        <end position="20"/>
    </location>
</feature>
<feature type="propeptide" id="PRO_0000021490" description="Removed by a dipeptidylpeptidase" evidence="2">
    <location>
        <begin position="21"/>
        <end position="27"/>
    </location>
</feature>
<feature type="peptide" id="PRO_0000021491" description="Bomanin Short 2">
    <location>
        <begin position="28"/>
        <end position="43"/>
    </location>
</feature>
<feature type="modified residue" description="Glycine amide" evidence="2 5">
    <location>
        <position position="43"/>
    </location>
</feature>
<feature type="disulfide bond" evidence="5">
    <location>
        <begin position="36"/>
        <end position="39"/>
    </location>
</feature>
<feature type="sequence conflict" description="In Ref. 1; AAC62494." evidence="8" ref="1">
    <original>FGLLALAN</original>
    <variation>LRSAGSGQT</variation>
    <location>
        <begin position="12"/>
        <end position="19"/>
    </location>
</feature>
<organism>
    <name type="scientific">Drosophila melanogaster</name>
    <name type="common">Fruit fly</name>
    <dbReference type="NCBI Taxonomy" id="7227"/>
    <lineage>
        <taxon>Eukaryota</taxon>
        <taxon>Metazoa</taxon>
        <taxon>Ecdysozoa</taxon>
        <taxon>Arthropoda</taxon>
        <taxon>Hexapoda</taxon>
        <taxon>Insecta</taxon>
        <taxon>Pterygota</taxon>
        <taxon>Neoptera</taxon>
        <taxon>Endopterygota</taxon>
        <taxon>Diptera</taxon>
        <taxon>Brachycera</taxon>
        <taxon>Muscomorpha</taxon>
        <taxon>Ephydroidea</taxon>
        <taxon>Drosophilidae</taxon>
        <taxon>Drosophila</taxon>
        <taxon>Sophophora</taxon>
    </lineage>
</organism>
<keyword id="KW-0027">Amidation</keyword>
<keyword id="KW-0903">Direct protein sequencing</keyword>
<keyword id="KW-1015">Disulfide bond</keyword>
<keyword id="KW-0391">Immunity</keyword>
<keyword id="KW-0399">Innate immunity</keyword>
<keyword id="KW-1185">Reference proteome</keyword>
<keyword id="KW-0964">Secreted</keyword>
<keyword id="KW-0732">Signal</keyword>
<proteinExistence type="evidence at protein level"/>
<comment type="function">
    <text evidence="3 4 5">Secreted immune-induced peptide induced by Toll signaling (PubMed:25915418, PubMed:29920489, PubMed:9736738). Has a role in resistance to bacterial and fungal infections (PubMed:25915418, PubMed:29920489, PubMed:9736738).</text>
</comment>
<comment type="subcellular location">
    <subcellularLocation>
        <location evidence="4 5">Secreted</location>
    </subcellularLocation>
</comment>
<comment type="tissue specificity">
    <text evidence="4 5">Hemolymph (at protein level).</text>
</comment>
<comment type="induction">
    <text evidence="4 5">By bacterial infection.</text>
</comment>
<comment type="mass spectrometry"/>
<comment type="similarity">
    <text evidence="8">Belongs to the bomanin family.</text>
</comment>
<sequence>MKFFSVVTVFVFGLLALANAVPLSPDPGNVVINGDCKYCNVHGGK</sequence>
<dbReference type="EMBL" id="AF074003">
    <property type="protein sequence ID" value="AAC62494.1"/>
    <property type="molecule type" value="mRNA"/>
</dbReference>
<dbReference type="EMBL" id="AE013599">
    <property type="protein sequence ID" value="AAF57708.1"/>
    <property type="molecule type" value="Genomic_DNA"/>
</dbReference>
<dbReference type="EMBL" id="AY071680">
    <property type="protein sequence ID" value="AAL49302.1"/>
    <property type="molecule type" value="mRNA"/>
</dbReference>
<dbReference type="RefSeq" id="NP_725776.1">
    <property type="nucleotide sequence ID" value="NM_166277.3"/>
</dbReference>
<dbReference type="BioGRID" id="72473">
    <property type="interactions" value="3"/>
</dbReference>
<dbReference type="DIP" id="DIP-17127N"/>
<dbReference type="FunCoup" id="O77150">
    <property type="interactions" value="122"/>
</dbReference>
<dbReference type="IntAct" id="O77150">
    <property type="interactions" value="3"/>
</dbReference>
<dbReference type="STRING" id="7227.FBpp0085845"/>
<dbReference type="PaxDb" id="7227-FBpp0085845"/>
<dbReference type="DNASU" id="49802"/>
<dbReference type="EnsemblMetazoa" id="FBtr0086664">
    <property type="protein sequence ID" value="FBpp0085845"/>
    <property type="gene ID" value="FBgn0025583"/>
</dbReference>
<dbReference type="GeneID" id="49802"/>
<dbReference type="KEGG" id="dme:Dmel_CG18106"/>
<dbReference type="AGR" id="FB:FBgn0025583"/>
<dbReference type="CTD" id="49802"/>
<dbReference type="FlyBase" id="FBgn0025583">
    <property type="gene designation" value="BomS2"/>
</dbReference>
<dbReference type="VEuPathDB" id="VectorBase:FBgn0025583"/>
<dbReference type="GeneTree" id="ENSGT00940000176352"/>
<dbReference type="HOGENOM" id="CLU_204809_0_0_1"/>
<dbReference type="InParanoid" id="O77150"/>
<dbReference type="OrthoDB" id="7805138at2759"/>
<dbReference type="PhylomeDB" id="O77150"/>
<dbReference type="BioGRID-ORCS" id="49802">
    <property type="hits" value="0 hits in 1 CRISPR screen"/>
</dbReference>
<dbReference type="GenomeRNAi" id="49802"/>
<dbReference type="PRO" id="PR:O77150"/>
<dbReference type="Proteomes" id="UP000000803">
    <property type="component" value="Chromosome 2R"/>
</dbReference>
<dbReference type="Bgee" id="FBgn0025583">
    <property type="expression patterns" value="Expressed in capitellum (Drosophila) and 138 other cell types or tissues"/>
</dbReference>
<dbReference type="GO" id="GO:0005576">
    <property type="term" value="C:extracellular region"/>
    <property type="evidence" value="ECO:0000314"/>
    <property type="project" value="UniProtKB"/>
</dbReference>
<dbReference type="GO" id="GO:0006952">
    <property type="term" value="P:defense response"/>
    <property type="evidence" value="ECO:0000314"/>
    <property type="project" value="UniProtKB"/>
</dbReference>
<dbReference type="GO" id="GO:0045087">
    <property type="term" value="P:innate immune response"/>
    <property type="evidence" value="ECO:0007669"/>
    <property type="project" value="UniProtKB-KW"/>
</dbReference>
<dbReference type="GO" id="GO:0009617">
    <property type="term" value="P:response to bacterium"/>
    <property type="evidence" value="ECO:0007007"/>
    <property type="project" value="FlyBase"/>
</dbReference>
<dbReference type="InterPro" id="IPR013172">
    <property type="entry name" value="Bomanin"/>
</dbReference>
<dbReference type="Pfam" id="PF08194">
    <property type="entry name" value="DIM"/>
    <property type="match status" value="1"/>
</dbReference>
<evidence type="ECO:0000255" key="1"/>
<evidence type="ECO:0000269" key="2">
    <source>
    </source>
</evidence>
<evidence type="ECO:0000269" key="3">
    <source>
    </source>
</evidence>
<evidence type="ECO:0000269" key="4">
    <source>
    </source>
</evidence>
<evidence type="ECO:0000269" key="5">
    <source>
    </source>
</evidence>
<evidence type="ECO:0000303" key="6">
    <source>
    </source>
</evidence>
<evidence type="ECO:0000303" key="7">
    <source>
    </source>
</evidence>
<evidence type="ECO:0000305" key="8"/>
<evidence type="ECO:0000312" key="9">
    <source>
        <dbReference type="FlyBase" id="FBgn0025583"/>
    </source>
</evidence>